<reference key="1">
    <citation type="journal article" date="2020" name="ACS Chem. Biol.">
        <title>Agrocybe aegerita serves as a gateway for identifying sesquiterpene biosynthetic enzymes in higher fungi.</title>
        <authorList>
            <person name="Zhang C."/>
            <person name="Chen X."/>
            <person name="Orban A."/>
            <person name="Shukal S."/>
            <person name="Birk F."/>
            <person name="Too H.P."/>
            <person name="Ruehl M."/>
        </authorList>
    </citation>
    <scope>NUCLEOTIDE SEQUENCE [GENOMIC DNA]</scope>
    <scope>FUNCTION</scope>
    <scope>DOMAIN</scope>
    <scope>CATALYTIC ACTIVITY</scope>
    <source>
        <strain>AAE3_05024</strain>
    </source>
</reference>
<reference key="2">
    <citation type="journal article" date="2018" name="BMC Genomics">
        <title>The genome sequence of the commercially cultivated mushroom Agrocybe aegerita reveals a conserved repertoire of fruiting-related genes and a versatile suite of biopolymer-degrading enzymes.</title>
        <authorList>
            <person name="Gupta D.K."/>
            <person name="Ruehl M."/>
            <person name="Mishra B."/>
            <person name="Kleofas V."/>
            <person name="Hofrichter M."/>
            <person name="Herzog R."/>
            <person name="Pecyna M.J."/>
            <person name="Sharma R."/>
            <person name="Kellner H."/>
            <person name="Hennicke F."/>
            <person name="Thines M."/>
        </authorList>
    </citation>
    <scope>NUCLEOTIDE SEQUENCE [LARGE SCALE GENOMIC DNA]</scope>
    <source>
        <strain>AAE3_05024</strain>
    </source>
</reference>
<feature type="signal peptide" evidence="3">
    <location>
        <begin position="1"/>
        <end position="25"/>
    </location>
</feature>
<feature type="chain" id="PRO_5024438505" description="Sesquiterpene synthase Agr5">
    <location>
        <begin position="26"/>
        <end position="430"/>
    </location>
</feature>
<feature type="short sequence motif" description="DDXXD motif" evidence="1">
    <location>
        <begin position="176"/>
        <end position="180"/>
    </location>
</feature>
<feature type="binding site" evidence="2">
    <location>
        <position position="176"/>
    </location>
    <ligand>
        <name>Mg(2+)</name>
        <dbReference type="ChEBI" id="CHEBI:18420"/>
        <label>1</label>
    </ligand>
</feature>
<feature type="binding site" evidence="2">
    <location>
        <position position="176"/>
    </location>
    <ligand>
        <name>Mg(2+)</name>
        <dbReference type="ChEBI" id="CHEBI:18420"/>
        <label>2</label>
    </ligand>
</feature>
<feature type="binding site" evidence="2">
    <location>
        <position position="311"/>
    </location>
    <ligand>
        <name>Mg(2+)</name>
        <dbReference type="ChEBI" id="CHEBI:18420"/>
        <label>3</label>
    </ligand>
</feature>
<feature type="binding site" evidence="2">
    <location>
        <position position="315"/>
    </location>
    <ligand>
        <name>Mg(2+)</name>
        <dbReference type="ChEBI" id="CHEBI:18420"/>
        <label>3</label>
    </ligand>
</feature>
<feature type="binding site" evidence="2">
    <location>
        <position position="319"/>
    </location>
    <ligand>
        <name>Mg(2+)</name>
        <dbReference type="ChEBI" id="CHEBI:18420"/>
        <label>3</label>
    </ligand>
</feature>
<feature type="binding site" evidence="2">
    <location>
        <position position="401"/>
    </location>
    <ligand>
        <name>(2E,6E)-farnesyl diphosphate</name>
        <dbReference type="ChEBI" id="CHEBI:175763"/>
    </ligand>
</feature>
<feature type="binding site" evidence="2">
    <location>
        <position position="402"/>
    </location>
    <ligand>
        <name>(2E,6E)-farnesyl diphosphate</name>
        <dbReference type="ChEBI" id="CHEBI:175763"/>
    </ligand>
</feature>
<feature type="glycosylation site" description="N-linked (GlcNAc...) asparagine" evidence="4">
    <location>
        <position position="113"/>
    </location>
</feature>
<dbReference type="EC" id="4.2.3.-" evidence="5"/>
<dbReference type="EC" id="4.2.3.88" evidence="5"/>
<dbReference type="EMBL" id="MN146028">
    <property type="protein sequence ID" value="QGA30881.1"/>
    <property type="molecule type" value="Genomic_DNA"/>
</dbReference>
<dbReference type="SMR" id="A0A5Q0QSI8"/>
<dbReference type="GlyCosmos" id="A0A5Q0QSI8">
    <property type="glycosylation" value="1 site, No reported glycans"/>
</dbReference>
<dbReference type="GO" id="GO:0046872">
    <property type="term" value="F:metal ion binding"/>
    <property type="evidence" value="ECO:0007669"/>
    <property type="project" value="UniProtKB-KW"/>
</dbReference>
<dbReference type="GO" id="GO:0010333">
    <property type="term" value="F:terpene synthase activity"/>
    <property type="evidence" value="ECO:0007669"/>
    <property type="project" value="InterPro"/>
</dbReference>
<dbReference type="GO" id="GO:0008299">
    <property type="term" value="P:isoprenoid biosynthetic process"/>
    <property type="evidence" value="ECO:0007669"/>
    <property type="project" value="UniProtKB-ARBA"/>
</dbReference>
<dbReference type="Gene3D" id="1.10.600.10">
    <property type="entry name" value="Farnesyl Diphosphate Synthase"/>
    <property type="match status" value="1"/>
</dbReference>
<dbReference type="InterPro" id="IPR008949">
    <property type="entry name" value="Isoprenoid_synthase_dom_sf"/>
</dbReference>
<dbReference type="InterPro" id="IPR034686">
    <property type="entry name" value="Terpene_cyclase-like_2"/>
</dbReference>
<dbReference type="PANTHER" id="PTHR35201:SF4">
    <property type="entry name" value="BETA-PINACENE SYNTHASE-RELATED"/>
    <property type="match status" value="1"/>
</dbReference>
<dbReference type="PANTHER" id="PTHR35201">
    <property type="entry name" value="TERPENE SYNTHASE"/>
    <property type="match status" value="1"/>
</dbReference>
<dbReference type="Pfam" id="PF19086">
    <property type="entry name" value="Terpene_syn_C_2"/>
    <property type="match status" value="1"/>
</dbReference>
<dbReference type="SFLD" id="SFLDS00005">
    <property type="entry name" value="Isoprenoid_Synthase_Type_I"/>
    <property type="match status" value="1"/>
</dbReference>
<dbReference type="SFLD" id="SFLDG01020">
    <property type="entry name" value="Terpene_Cyclase_Like_2"/>
    <property type="match status" value="1"/>
</dbReference>
<dbReference type="SUPFAM" id="SSF48576">
    <property type="entry name" value="Terpenoid synthases"/>
    <property type="match status" value="1"/>
</dbReference>
<accession>A0A5Q0QSI8</accession>
<evidence type="ECO:0000250" key="1">
    <source>
        <dbReference type="UniProtKB" id="P0DL13"/>
    </source>
</evidence>
<evidence type="ECO:0000250" key="2">
    <source>
        <dbReference type="UniProtKB" id="Q9UR08"/>
    </source>
</evidence>
<evidence type="ECO:0000255" key="3"/>
<evidence type="ECO:0000255" key="4">
    <source>
        <dbReference type="PROSITE-ProRule" id="PRU00498"/>
    </source>
</evidence>
<evidence type="ECO:0000269" key="5">
    <source>
    </source>
</evidence>
<evidence type="ECO:0000303" key="6">
    <source>
    </source>
</evidence>
<protein>
    <recommendedName>
        <fullName evidence="6">Sesquiterpene synthase Agr5</fullName>
        <ecNumber evidence="5">4.2.3.-</ecNumber>
        <ecNumber evidence="5">4.2.3.88</ecNumber>
    </recommendedName>
    <alternativeName>
        <fullName evidence="6">Terpene cyclase Agr5</fullName>
    </alternativeName>
</protein>
<gene>
    <name evidence="6" type="primary">Agr5</name>
</gene>
<organism>
    <name type="scientific">Cyclocybe aegerita</name>
    <name type="common">Black poplar mushroom</name>
    <name type="synonym">Agrocybe aegerita</name>
    <dbReference type="NCBI Taxonomy" id="1973307"/>
    <lineage>
        <taxon>Eukaryota</taxon>
        <taxon>Fungi</taxon>
        <taxon>Dikarya</taxon>
        <taxon>Basidiomycota</taxon>
        <taxon>Agaricomycotina</taxon>
        <taxon>Agaricomycetes</taxon>
        <taxon>Agaricomycetidae</taxon>
        <taxon>Agaricales</taxon>
        <taxon>Agaricineae</taxon>
        <taxon>Bolbitiaceae</taxon>
        <taxon>Cyclocybe</taxon>
    </lineage>
</organism>
<sequence length="430" mass="48034">MASSLLEPSLAAIALVILLASVSLSRKKRPAAPEPQGLSVLGNLFDIPKRASSIIYLALGKPYNTLTKRAVSQLQGYTPGSHIDATSHSPRVFRLPNLEETFSVFPDHGLNPNYTSARTDSRAWINQYTKVVCGPKMVAFMNNCEFELSNSHCYPYAGYKGLKATMDLTNILWLYDEYTDTGSGAEAVKAAGIVARALREPDYDDGTWVCRMMKSFKQNHIDKAGPGVARRFIDNFCNYVEVVGREAELREKNEVLDIPNYVTFRRETSAVRTCFDLVEYCLDLDLPQYVHDDPVFISGYNAGMDLVFWANDLVSYNMEQSKGHSGANVVTVIMKSKGVDLQTAVDFLGGYCEALTAQLLEAKRILQARSDAAYSRDVVRLMDAFGDWVRGNVAWSFETERYFGKENKRVKETLLVELKEPFVGALALKE</sequence>
<proteinExistence type="evidence at protein level"/>
<comment type="function">
    <text evidence="5">Terpene cyclase that catalyzes the cyclization of farnesyl diphosphate (FPP) to viridiflorene and viridiflorol.</text>
</comment>
<comment type="catalytic activity">
    <reaction evidence="5">
        <text>(2E,6E)-farnesyl diphosphate = viridiflorene + diphosphate</text>
        <dbReference type="Rhea" id="RHEA:31811"/>
        <dbReference type="ChEBI" id="CHEBI:33019"/>
        <dbReference type="ChEBI" id="CHEBI:63444"/>
        <dbReference type="ChEBI" id="CHEBI:175763"/>
        <dbReference type="EC" id="4.2.3.88"/>
    </reaction>
    <physiologicalReaction direction="left-to-right" evidence="5">
        <dbReference type="Rhea" id="RHEA:31812"/>
    </physiologicalReaction>
</comment>
<comment type="cofactor">
    <cofactor evidence="5">
        <name>Mg(2+)</name>
        <dbReference type="ChEBI" id="CHEBI:18420"/>
    </cofactor>
</comment>
<comment type="domain">
    <text evidence="5">The DDXXD motif is important for the catalytic activity, presumably through binding to Mg(2+).</text>
</comment>
<comment type="similarity">
    <text evidence="5">Belongs to the terpene synthase family.</text>
</comment>
<name>AGR5_CYCAE</name>
<keyword id="KW-0325">Glycoprotein</keyword>
<keyword id="KW-0456">Lyase</keyword>
<keyword id="KW-0460">Magnesium</keyword>
<keyword id="KW-0479">Metal-binding</keyword>
<keyword id="KW-0732">Signal</keyword>